<protein>
    <recommendedName>
        <fullName evidence="1">Small ribosomal subunit protein uS2</fullName>
    </recommendedName>
    <alternativeName>
        <fullName evidence="3">40S ribosomal protein S0</fullName>
    </alternativeName>
</protein>
<organism>
    <name type="scientific">Talaromyces marneffei (strain ATCC 18224 / CBS 334.59 / QM 7333)</name>
    <name type="common">Penicillium marneffei</name>
    <dbReference type="NCBI Taxonomy" id="441960"/>
    <lineage>
        <taxon>Eukaryota</taxon>
        <taxon>Fungi</taxon>
        <taxon>Dikarya</taxon>
        <taxon>Ascomycota</taxon>
        <taxon>Pezizomycotina</taxon>
        <taxon>Eurotiomycetes</taxon>
        <taxon>Eurotiomycetidae</taxon>
        <taxon>Eurotiales</taxon>
        <taxon>Trichocomaceae</taxon>
        <taxon>Talaromyces</taxon>
        <taxon>Talaromyces sect. Talaromyces</taxon>
    </lineage>
</organism>
<reference key="1">
    <citation type="journal article" date="2015" name="Genome Announc.">
        <title>Genome sequence of the AIDS-associated pathogen Penicillium marneffei (ATCC18224) and its near taxonomic relative Talaromyces stipitatus (ATCC10500).</title>
        <authorList>
            <person name="Nierman W.C."/>
            <person name="Fedorova-Abrams N.D."/>
            <person name="Andrianopoulos A."/>
        </authorList>
    </citation>
    <scope>NUCLEOTIDE SEQUENCE [LARGE SCALE GENOMIC DNA]</scope>
    <source>
        <strain>ATCC 18224 / CBS 334.59 / QM 7333</strain>
    </source>
</reference>
<name>RSSA_TALMQ</name>
<dbReference type="EMBL" id="DS995899">
    <property type="protein sequence ID" value="EEA27068.1"/>
    <property type="molecule type" value="Genomic_DNA"/>
</dbReference>
<dbReference type="RefSeq" id="XP_002143583.1">
    <property type="nucleotide sequence ID" value="XM_002143547.1"/>
</dbReference>
<dbReference type="SMR" id="B6Q3G2"/>
<dbReference type="STRING" id="441960.B6Q3G2"/>
<dbReference type="VEuPathDB" id="FungiDB:PMAA_019690"/>
<dbReference type="HOGENOM" id="CLU_058171_0_1_1"/>
<dbReference type="OrthoDB" id="6994at28568"/>
<dbReference type="PhylomeDB" id="B6Q3G2"/>
<dbReference type="Proteomes" id="UP000001294">
    <property type="component" value="Unassembled WGS sequence"/>
</dbReference>
<dbReference type="GO" id="GO:0022627">
    <property type="term" value="C:cytosolic small ribosomal subunit"/>
    <property type="evidence" value="ECO:0007669"/>
    <property type="project" value="UniProtKB-UniRule"/>
</dbReference>
<dbReference type="GO" id="GO:0003735">
    <property type="term" value="F:structural constituent of ribosome"/>
    <property type="evidence" value="ECO:0007669"/>
    <property type="project" value="UniProtKB-UniRule"/>
</dbReference>
<dbReference type="GO" id="GO:0000028">
    <property type="term" value="P:ribosomal small subunit assembly"/>
    <property type="evidence" value="ECO:0007669"/>
    <property type="project" value="UniProtKB-UniRule"/>
</dbReference>
<dbReference type="GO" id="GO:0006412">
    <property type="term" value="P:translation"/>
    <property type="evidence" value="ECO:0007669"/>
    <property type="project" value="UniProtKB-UniRule"/>
</dbReference>
<dbReference type="CDD" id="cd01425">
    <property type="entry name" value="RPS2"/>
    <property type="match status" value="1"/>
</dbReference>
<dbReference type="FunFam" id="3.40.50.10490:FF:000010">
    <property type="entry name" value="40S ribosomal protein S0"/>
    <property type="match status" value="1"/>
</dbReference>
<dbReference type="Gene3D" id="3.40.50.10490">
    <property type="entry name" value="Glucose-6-phosphate isomerase like protein, domain 1"/>
    <property type="match status" value="1"/>
</dbReference>
<dbReference type="HAMAP" id="MF_03015">
    <property type="entry name" value="Ribosomal_S2_euk"/>
    <property type="match status" value="1"/>
</dbReference>
<dbReference type="InterPro" id="IPR001865">
    <property type="entry name" value="Ribosomal_uS2"/>
</dbReference>
<dbReference type="InterPro" id="IPR032281">
    <property type="entry name" value="Ribosomal_uS2_C"/>
</dbReference>
<dbReference type="InterPro" id="IPR018130">
    <property type="entry name" value="Ribosomal_uS2_CS"/>
</dbReference>
<dbReference type="InterPro" id="IPR027498">
    <property type="entry name" value="Ribosomal_uS2_euk"/>
</dbReference>
<dbReference type="InterPro" id="IPR005707">
    <property type="entry name" value="Ribosomal_uS2_euk/arc"/>
</dbReference>
<dbReference type="InterPro" id="IPR023591">
    <property type="entry name" value="Ribosomal_uS2_flav_dom_sf"/>
</dbReference>
<dbReference type="NCBIfam" id="TIGR01012">
    <property type="entry name" value="uS2_euk_arch"/>
    <property type="match status" value="1"/>
</dbReference>
<dbReference type="PANTHER" id="PTHR11489">
    <property type="entry name" value="40S RIBOSOMAL PROTEIN SA"/>
    <property type="match status" value="1"/>
</dbReference>
<dbReference type="Pfam" id="PF16122">
    <property type="entry name" value="40S_SA_C"/>
    <property type="match status" value="1"/>
</dbReference>
<dbReference type="Pfam" id="PF00318">
    <property type="entry name" value="Ribosomal_S2"/>
    <property type="match status" value="2"/>
</dbReference>
<dbReference type="PRINTS" id="PR00395">
    <property type="entry name" value="RIBOSOMALS2"/>
</dbReference>
<dbReference type="SUPFAM" id="SSF52313">
    <property type="entry name" value="Ribosomal protein S2"/>
    <property type="match status" value="1"/>
</dbReference>
<dbReference type="PROSITE" id="PS00963">
    <property type="entry name" value="RIBOSOMAL_S2_2"/>
    <property type="match status" value="1"/>
</dbReference>
<proteinExistence type="inferred from homology"/>
<sequence>MAPSNLPPVFNATSQDIEMLLAAQCHLGSKNLQVHMEPYLWKTRPDGINVINIGKTWEKIVLAARIIAAIDNPADVAVISARPYGQRAVLKFASHTGATAIAGRFTPGNFTNYITRSFKEPRLIIVTDPRTDAQAIKEASYVNIPVIALCDTDSPTEFVDVAIPTNNKGRHAIGLVWWLLAREVLRLRGTLATRETEWDVVVDLYFYRDPEAEETKEIADETKVAGAEEVGPAAIESGYVGDSWDAAAPGAAAPGAAFAAASATAGATWEAEASGDWAAESAQPNPETKW</sequence>
<evidence type="ECO:0000255" key="1">
    <source>
        <dbReference type="HAMAP-Rule" id="MF_03015"/>
    </source>
</evidence>
<evidence type="ECO:0000256" key="2">
    <source>
        <dbReference type="SAM" id="MobiDB-lite"/>
    </source>
</evidence>
<evidence type="ECO:0000305" key="3"/>
<accession>B6Q3G2</accession>
<comment type="function">
    <text evidence="1">Required for the assembly and/or stability of the 40S ribosomal subunit. Required for the processing of the 20S rRNA-precursor to mature 18S rRNA in a late step of the maturation of 40S ribosomal subunits.</text>
</comment>
<comment type="subunit">
    <text evidence="1">Component of the small ribosomal subunit. Mature ribosomes consist of a small (40S) and a large (60S) subunit. The 40S subunit contains about 33 different proteins and 1 molecule of RNA (18S). The 60S subunit contains about 49 different proteins and 3 molecules of RNA (25S, 5.8S and 5S). Interacts with rps21.</text>
</comment>
<comment type="subcellular location">
    <subcellularLocation>
        <location evidence="1">Cytoplasm</location>
    </subcellularLocation>
</comment>
<comment type="similarity">
    <text evidence="1">Belongs to the universal ribosomal protein uS2 family.</text>
</comment>
<feature type="chain" id="PRO_0000389285" description="Small ribosomal subunit protein uS2">
    <location>
        <begin position="1"/>
        <end position="290"/>
    </location>
</feature>
<feature type="region of interest" description="Disordered" evidence="2">
    <location>
        <begin position="269"/>
        <end position="290"/>
    </location>
</feature>
<keyword id="KW-0963">Cytoplasm</keyword>
<keyword id="KW-1185">Reference proteome</keyword>
<keyword id="KW-0687">Ribonucleoprotein</keyword>
<keyword id="KW-0689">Ribosomal protein</keyword>
<gene>
    <name type="primary">rps0</name>
    <name type="ORF">PMAA_019690</name>
</gene>